<dbReference type="EC" id="2.3.2.6" evidence="1"/>
<dbReference type="EMBL" id="CP000075">
    <property type="protein sequence ID" value="AAY38212.1"/>
    <property type="molecule type" value="Genomic_DNA"/>
</dbReference>
<dbReference type="RefSeq" id="WP_003405081.1">
    <property type="nucleotide sequence ID" value="NC_007005.1"/>
</dbReference>
<dbReference type="RefSeq" id="YP_236250.1">
    <property type="nucleotide sequence ID" value="NC_007005.1"/>
</dbReference>
<dbReference type="SMR" id="Q4ZRL0"/>
<dbReference type="STRING" id="205918.Psyr_3180"/>
<dbReference type="KEGG" id="psb:Psyr_3180"/>
<dbReference type="PATRIC" id="fig|205918.7.peg.3246"/>
<dbReference type="eggNOG" id="COG2360">
    <property type="taxonomic scope" value="Bacteria"/>
</dbReference>
<dbReference type="HOGENOM" id="CLU_075045_0_0_6"/>
<dbReference type="OrthoDB" id="9790282at2"/>
<dbReference type="Proteomes" id="UP000000426">
    <property type="component" value="Chromosome"/>
</dbReference>
<dbReference type="GO" id="GO:0005737">
    <property type="term" value="C:cytoplasm"/>
    <property type="evidence" value="ECO:0007669"/>
    <property type="project" value="UniProtKB-SubCell"/>
</dbReference>
<dbReference type="GO" id="GO:0008914">
    <property type="term" value="F:leucyl-tRNA--protein transferase activity"/>
    <property type="evidence" value="ECO:0007669"/>
    <property type="project" value="UniProtKB-UniRule"/>
</dbReference>
<dbReference type="GO" id="GO:0030163">
    <property type="term" value="P:protein catabolic process"/>
    <property type="evidence" value="ECO:0007669"/>
    <property type="project" value="UniProtKB-UniRule"/>
</dbReference>
<dbReference type="FunFam" id="3.30.70.3550:FF:000001">
    <property type="entry name" value="Leucyl/phenylalanyl-tRNA--protein transferase"/>
    <property type="match status" value="1"/>
</dbReference>
<dbReference type="FunFam" id="3.40.630.70:FF:000001">
    <property type="entry name" value="Leucyl/phenylalanyl-tRNA--protein transferase"/>
    <property type="match status" value="1"/>
</dbReference>
<dbReference type="Gene3D" id="3.40.630.70">
    <property type="entry name" value="Leucyl/phenylalanyl-tRNA-protein transferase, C-terminal domain"/>
    <property type="match status" value="1"/>
</dbReference>
<dbReference type="Gene3D" id="3.30.70.3550">
    <property type="entry name" value="Leucyl/phenylalanyl-tRNA-protein transferase, N-terminal domain"/>
    <property type="match status" value="1"/>
</dbReference>
<dbReference type="HAMAP" id="MF_00688">
    <property type="entry name" value="Leu_Phe_trans"/>
    <property type="match status" value="1"/>
</dbReference>
<dbReference type="InterPro" id="IPR016181">
    <property type="entry name" value="Acyl_CoA_acyltransferase"/>
</dbReference>
<dbReference type="InterPro" id="IPR004616">
    <property type="entry name" value="Leu/Phe-tRNA_Trfase"/>
</dbReference>
<dbReference type="InterPro" id="IPR042203">
    <property type="entry name" value="Leu/Phe-tRNA_Trfase_C"/>
</dbReference>
<dbReference type="InterPro" id="IPR042221">
    <property type="entry name" value="Leu/Phe-tRNA_Trfase_N"/>
</dbReference>
<dbReference type="NCBIfam" id="TIGR00667">
    <property type="entry name" value="aat"/>
    <property type="match status" value="1"/>
</dbReference>
<dbReference type="PANTHER" id="PTHR30098">
    <property type="entry name" value="LEUCYL/PHENYLALANYL-TRNA--PROTEIN TRANSFERASE"/>
    <property type="match status" value="1"/>
</dbReference>
<dbReference type="PANTHER" id="PTHR30098:SF2">
    <property type="entry name" value="LEUCYL_PHENYLALANYL-TRNA--PROTEIN TRANSFERASE"/>
    <property type="match status" value="1"/>
</dbReference>
<dbReference type="Pfam" id="PF03588">
    <property type="entry name" value="Leu_Phe_trans"/>
    <property type="match status" value="1"/>
</dbReference>
<dbReference type="SUPFAM" id="SSF55729">
    <property type="entry name" value="Acyl-CoA N-acyltransferases (Nat)"/>
    <property type="match status" value="1"/>
</dbReference>
<feature type="chain" id="PRO_0000258080" description="Leucyl/phenylalanyl-tRNA--protein transferase">
    <location>
        <begin position="1"/>
        <end position="229"/>
    </location>
</feature>
<proteinExistence type="inferred from homology"/>
<gene>
    <name evidence="1" type="primary">aat</name>
    <name type="ordered locus">Psyr_3180</name>
</gene>
<name>LFTR_PSEU2</name>
<accession>Q4ZRL0</accession>
<comment type="function">
    <text evidence="1">Functions in the N-end rule pathway of protein degradation where it conjugates Leu, Phe and, less efficiently, Met from aminoacyl-tRNAs to the N-termini of proteins containing an N-terminal arginine or lysine.</text>
</comment>
<comment type="catalytic activity">
    <reaction evidence="1">
        <text>N-terminal L-lysyl-[protein] + L-leucyl-tRNA(Leu) = N-terminal L-leucyl-L-lysyl-[protein] + tRNA(Leu) + H(+)</text>
        <dbReference type="Rhea" id="RHEA:12340"/>
        <dbReference type="Rhea" id="RHEA-COMP:9613"/>
        <dbReference type="Rhea" id="RHEA-COMP:9622"/>
        <dbReference type="Rhea" id="RHEA-COMP:12670"/>
        <dbReference type="Rhea" id="RHEA-COMP:12671"/>
        <dbReference type="ChEBI" id="CHEBI:15378"/>
        <dbReference type="ChEBI" id="CHEBI:65249"/>
        <dbReference type="ChEBI" id="CHEBI:78442"/>
        <dbReference type="ChEBI" id="CHEBI:78494"/>
        <dbReference type="ChEBI" id="CHEBI:133043"/>
        <dbReference type="EC" id="2.3.2.6"/>
    </reaction>
</comment>
<comment type="catalytic activity">
    <reaction evidence="1">
        <text>N-terminal L-arginyl-[protein] + L-leucyl-tRNA(Leu) = N-terminal L-leucyl-L-arginyl-[protein] + tRNA(Leu) + H(+)</text>
        <dbReference type="Rhea" id="RHEA:50416"/>
        <dbReference type="Rhea" id="RHEA-COMP:9613"/>
        <dbReference type="Rhea" id="RHEA-COMP:9622"/>
        <dbReference type="Rhea" id="RHEA-COMP:12672"/>
        <dbReference type="Rhea" id="RHEA-COMP:12673"/>
        <dbReference type="ChEBI" id="CHEBI:15378"/>
        <dbReference type="ChEBI" id="CHEBI:64719"/>
        <dbReference type="ChEBI" id="CHEBI:78442"/>
        <dbReference type="ChEBI" id="CHEBI:78494"/>
        <dbReference type="ChEBI" id="CHEBI:133044"/>
        <dbReference type="EC" id="2.3.2.6"/>
    </reaction>
</comment>
<comment type="catalytic activity">
    <reaction evidence="1">
        <text>L-phenylalanyl-tRNA(Phe) + an N-terminal L-alpha-aminoacyl-[protein] = an N-terminal L-phenylalanyl-L-alpha-aminoacyl-[protein] + tRNA(Phe)</text>
        <dbReference type="Rhea" id="RHEA:43632"/>
        <dbReference type="Rhea" id="RHEA-COMP:9668"/>
        <dbReference type="Rhea" id="RHEA-COMP:9699"/>
        <dbReference type="Rhea" id="RHEA-COMP:10636"/>
        <dbReference type="Rhea" id="RHEA-COMP:10637"/>
        <dbReference type="ChEBI" id="CHEBI:78442"/>
        <dbReference type="ChEBI" id="CHEBI:78531"/>
        <dbReference type="ChEBI" id="CHEBI:78597"/>
        <dbReference type="ChEBI" id="CHEBI:83561"/>
        <dbReference type="EC" id="2.3.2.6"/>
    </reaction>
</comment>
<comment type="subcellular location">
    <subcellularLocation>
        <location evidence="1">Cytoplasm</location>
    </subcellularLocation>
</comment>
<comment type="similarity">
    <text evidence="1">Belongs to the L/F-transferase family.</text>
</comment>
<reference key="1">
    <citation type="journal article" date="2005" name="Proc. Natl. Acad. Sci. U.S.A.">
        <title>Comparison of the complete genome sequences of Pseudomonas syringae pv. syringae B728a and pv. tomato DC3000.</title>
        <authorList>
            <person name="Feil H."/>
            <person name="Feil W.S."/>
            <person name="Chain P."/>
            <person name="Larimer F."/>
            <person name="Dibartolo G."/>
            <person name="Copeland A."/>
            <person name="Lykidis A."/>
            <person name="Trong S."/>
            <person name="Nolan M."/>
            <person name="Goltsman E."/>
            <person name="Thiel J."/>
            <person name="Malfatti S."/>
            <person name="Loper J.E."/>
            <person name="Lapidus A."/>
            <person name="Detter J.C."/>
            <person name="Land M."/>
            <person name="Richardson P.M."/>
            <person name="Kyrpides N.C."/>
            <person name="Ivanova N."/>
            <person name="Lindow S.E."/>
        </authorList>
    </citation>
    <scope>NUCLEOTIDE SEQUENCE [LARGE SCALE GENOMIC DNA]</scope>
    <source>
        <strain>B728a</strain>
    </source>
</reference>
<sequence>MLTWLNRNSLDFPPLEKALREPNGLLAAGGDLSADRLISAYRHGCFPWFQDGQPILWWSPDPRTVLFPEELHISRSLAKVLRQSRYRVTFDQDFASVIKACAAPRSYANETWITGSMQAAYVELHRRGHAHSVEVWDQDELVGGLYGLAMGQLFFGESMFSRADNASKVGFATLVEHLTAWGFVLIDCQMPTQHLHSFGARSIPRQTFADYLSRHLDQPTDADWSARRV</sequence>
<protein>
    <recommendedName>
        <fullName evidence="1">Leucyl/phenylalanyl-tRNA--protein transferase</fullName>
        <ecNumber evidence="1">2.3.2.6</ecNumber>
    </recommendedName>
    <alternativeName>
        <fullName evidence="1">L/F-transferase</fullName>
    </alternativeName>
    <alternativeName>
        <fullName evidence="1">Leucyltransferase</fullName>
    </alternativeName>
    <alternativeName>
        <fullName evidence="1">Phenyalanyltransferase</fullName>
    </alternativeName>
</protein>
<keyword id="KW-0012">Acyltransferase</keyword>
<keyword id="KW-0963">Cytoplasm</keyword>
<keyword id="KW-0808">Transferase</keyword>
<evidence type="ECO:0000255" key="1">
    <source>
        <dbReference type="HAMAP-Rule" id="MF_00688"/>
    </source>
</evidence>
<organism>
    <name type="scientific">Pseudomonas syringae pv. syringae (strain B728a)</name>
    <dbReference type="NCBI Taxonomy" id="205918"/>
    <lineage>
        <taxon>Bacteria</taxon>
        <taxon>Pseudomonadati</taxon>
        <taxon>Pseudomonadota</taxon>
        <taxon>Gammaproteobacteria</taxon>
        <taxon>Pseudomonadales</taxon>
        <taxon>Pseudomonadaceae</taxon>
        <taxon>Pseudomonas</taxon>
        <taxon>Pseudomonas syringae</taxon>
    </lineage>
</organism>